<protein>
    <recommendedName>
        <fullName evidence="1">Apolipoprotein N-acyltransferase</fullName>
        <shortName evidence="1">ALP N-acyltransferase</shortName>
        <ecNumber evidence="1">2.3.1.269</ecNumber>
    </recommendedName>
</protein>
<dbReference type="EC" id="2.3.1.269" evidence="1"/>
<dbReference type="EMBL" id="L42023">
    <property type="protein sequence ID" value="AAC21967.1"/>
    <property type="molecule type" value="Genomic_DNA"/>
</dbReference>
<dbReference type="PIR" id="H64060">
    <property type="entry name" value="H64060"/>
</dbReference>
<dbReference type="RefSeq" id="NP_438469.2">
    <property type="nucleotide sequence ID" value="NC_000907.1"/>
</dbReference>
<dbReference type="SMR" id="P44626"/>
<dbReference type="STRING" id="71421.HI_0302"/>
<dbReference type="EnsemblBacteria" id="AAC21967">
    <property type="protein sequence ID" value="AAC21967"/>
    <property type="gene ID" value="HI_0302"/>
</dbReference>
<dbReference type="KEGG" id="hin:HI_0302"/>
<dbReference type="PATRIC" id="fig|71421.8.peg.319"/>
<dbReference type="eggNOG" id="COG0815">
    <property type="taxonomic scope" value="Bacteria"/>
</dbReference>
<dbReference type="HOGENOM" id="CLU_019563_3_0_6"/>
<dbReference type="OrthoDB" id="9804277at2"/>
<dbReference type="PhylomeDB" id="P44626"/>
<dbReference type="UniPathway" id="UPA00666"/>
<dbReference type="Proteomes" id="UP000000579">
    <property type="component" value="Chromosome"/>
</dbReference>
<dbReference type="GO" id="GO:0005886">
    <property type="term" value="C:plasma membrane"/>
    <property type="evidence" value="ECO:0007669"/>
    <property type="project" value="UniProtKB-SubCell"/>
</dbReference>
<dbReference type="GO" id="GO:0016410">
    <property type="term" value="F:N-acyltransferase activity"/>
    <property type="evidence" value="ECO:0007669"/>
    <property type="project" value="UniProtKB-UniRule"/>
</dbReference>
<dbReference type="GO" id="GO:0042158">
    <property type="term" value="P:lipoprotein biosynthetic process"/>
    <property type="evidence" value="ECO:0007669"/>
    <property type="project" value="UniProtKB-UniRule"/>
</dbReference>
<dbReference type="CDD" id="cd07571">
    <property type="entry name" value="ALP_N-acyl_transferase"/>
    <property type="match status" value="1"/>
</dbReference>
<dbReference type="Gene3D" id="3.60.110.10">
    <property type="entry name" value="Carbon-nitrogen hydrolase"/>
    <property type="match status" value="1"/>
</dbReference>
<dbReference type="HAMAP" id="MF_01148">
    <property type="entry name" value="Lnt"/>
    <property type="match status" value="1"/>
</dbReference>
<dbReference type="InterPro" id="IPR004563">
    <property type="entry name" value="Apolipo_AcylTrfase"/>
</dbReference>
<dbReference type="InterPro" id="IPR003010">
    <property type="entry name" value="C-N_Hydrolase"/>
</dbReference>
<dbReference type="InterPro" id="IPR036526">
    <property type="entry name" value="C-N_Hydrolase_sf"/>
</dbReference>
<dbReference type="InterPro" id="IPR045378">
    <property type="entry name" value="LNT_N"/>
</dbReference>
<dbReference type="NCBIfam" id="TIGR00546">
    <property type="entry name" value="lnt"/>
    <property type="match status" value="1"/>
</dbReference>
<dbReference type="PANTHER" id="PTHR38686">
    <property type="entry name" value="APOLIPOPROTEIN N-ACYLTRANSFERASE"/>
    <property type="match status" value="1"/>
</dbReference>
<dbReference type="PANTHER" id="PTHR38686:SF1">
    <property type="entry name" value="APOLIPOPROTEIN N-ACYLTRANSFERASE"/>
    <property type="match status" value="1"/>
</dbReference>
<dbReference type="Pfam" id="PF00795">
    <property type="entry name" value="CN_hydrolase"/>
    <property type="match status" value="1"/>
</dbReference>
<dbReference type="Pfam" id="PF20154">
    <property type="entry name" value="LNT_N"/>
    <property type="match status" value="1"/>
</dbReference>
<dbReference type="SUPFAM" id="SSF56317">
    <property type="entry name" value="Carbon-nitrogen hydrolase"/>
    <property type="match status" value="1"/>
</dbReference>
<dbReference type="PROSITE" id="PS50263">
    <property type="entry name" value="CN_HYDROLASE"/>
    <property type="match status" value="1"/>
</dbReference>
<comment type="function">
    <text evidence="1">Catalyzes the phospholipid dependent N-acylation of the N-terminal cysteine of apolipoprotein, the last step in lipoprotein maturation.</text>
</comment>
<comment type="catalytic activity">
    <reaction evidence="1">
        <text>N-terminal S-1,2-diacyl-sn-glyceryl-L-cysteinyl-[lipoprotein] + a glycerophospholipid = N-acyl-S-1,2-diacyl-sn-glyceryl-L-cysteinyl-[lipoprotein] + a 2-acyl-sn-glycero-3-phospholipid + H(+)</text>
        <dbReference type="Rhea" id="RHEA:48228"/>
        <dbReference type="Rhea" id="RHEA-COMP:14681"/>
        <dbReference type="Rhea" id="RHEA-COMP:14684"/>
        <dbReference type="ChEBI" id="CHEBI:15378"/>
        <dbReference type="ChEBI" id="CHEBI:136912"/>
        <dbReference type="ChEBI" id="CHEBI:140656"/>
        <dbReference type="ChEBI" id="CHEBI:140657"/>
        <dbReference type="ChEBI" id="CHEBI:140660"/>
        <dbReference type="EC" id="2.3.1.269"/>
    </reaction>
</comment>
<comment type="pathway">
    <text evidence="1">Protein modification; lipoprotein biosynthesis (N-acyl transfer).</text>
</comment>
<comment type="subcellular location">
    <subcellularLocation>
        <location evidence="1">Cell inner membrane</location>
        <topology evidence="1">Multi-pass membrane protein</topology>
    </subcellularLocation>
</comment>
<comment type="similarity">
    <text evidence="1 2">Belongs to the CN hydrolase family. Apolipoprotein N-acyltransferase subfamily.</text>
</comment>
<reference key="1">
    <citation type="journal article" date="1995" name="Science">
        <title>Whole-genome random sequencing and assembly of Haemophilus influenzae Rd.</title>
        <authorList>
            <person name="Fleischmann R.D."/>
            <person name="Adams M.D."/>
            <person name="White O."/>
            <person name="Clayton R.A."/>
            <person name="Kirkness E.F."/>
            <person name="Kerlavage A.R."/>
            <person name="Bult C.J."/>
            <person name="Tomb J.-F."/>
            <person name="Dougherty B.A."/>
            <person name="Merrick J.M."/>
            <person name="McKenney K."/>
            <person name="Sutton G.G."/>
            <person name="FitzHugh W."/>
            <person name="Fields C.A."/>
            <person name="Gocayne J.D."/>
            <person name="Scott J.D."/>
            <person name="Shirley R."/>
            <person name="Liu L.-I."/>
            <person name="Glodek A."/>
            <person name="Kelley J.M."/>
            <person name="Weidman J.F."/>
            <person name="Phillips C.A."/>
            <person name="Spriggs T."/>
            <person name="Hedblom E."/>
            <person name="Cotton M.D."/>
            <person name="Utterback T.R."/>
            <person name="Hanna M.C."/>
            <person name="Nguyen D.T."/>
            <person name="Saudek D.M."/>
            <person name="Brandon R.C."/>
            <person name="Fine L.D."/>
            <person name="Fritchman J.L."/>
            <person name="Fuhrmann J.L."/>
            <person name="Geoghagen N.S.M."/>
            <person name="Gnehm C.L."/>
            <person name="McDonald L.A."/>
            <person name="Small K.V."/>
            <person name="Fraser C.M."/>
            <person name="Smith H.O."/>
            <person name="Venter J.C."/>
        </authorList>
    </citation>
    <scope>NUCLEOTIDE SEQUENCE [LARGE SCALE GENOMIC DNA]</scope>
    <source>
        <strain>ATCC 51907 / DSM 11121 / KW20 / Rd</strain>
    </source>
</reference>
<proteinExistence type="inferred from homology"/>
<accession>P44626</accession>
<gene>
    <name evidence="1" type="primary">lnt</name>
    <name type="synonym">cutE</name>
    <name type="ordered locus">HI_0302</name>
</gene>
<name>LNT_HAEIN</name>
<feature type="chain" id="PRO_0000178068" description="Apolipoprotein N-acyltransferase">
    <location>
        <begin position="1"/>
        <end position="522"/>
    </location>
</feature>
<feature type="transmembrane region" description="Helical" evidence="1">
    <location>
        <begin position="17"/>
        <end position="37"/>
    </location>
</feature>
<feature type="transmembrane region" description="Helical" evidence="1">
    <location>
        <begin position="61"/>
        <end position="81"/>
    </location>
</feature>
<feature type="transmembrane region" description="Helical" evidence="1">
    <location>
        <begin position="98"/>
        <end position="118"/>
    </location>
</feature>
<feature type="transmembrane region" description="Helical" evidence="1">
    <location>
        <begin position="127"/>
        <end position="147"/>
    </location>
</feature>
<feature type="transmembrane region" description="Helical" evidence="1">
    <location>
        <begin position="164"/>
        <end position="184"/>
    </location>
</feature>
<feature type="transmembrane region" description="Helical" evidence="1">
    <location>
        <begin position="197"/>
        <end position="217"/>
    </location>
</feature>
<feature type="transmembrane region" description="Helical" evidence="1">
    <location>
        <begin position="495"/>
        <end position="515"/>
    </location>
</feature>
<feature type="domain" description="CN hydrolase" evidence="1">
    <location>
        <begin position="236"/>
        <end position="483"/>
    </location>
</feature>
<feature type="active site" description="Proton acceptor" evidence="1">
    <location>
        <position position="276"/>
    </location>
</feature>
<feature type="active site" evidence="1">
    <location>
        <position position="342"/>
    </location>
</feature>
<feature type="active site" description="Nucleophile" evidence="1">
    <location>
        <position position="394"/>
    </location>
</feature>
<keyword id="KW-0012">Acyltransferase</keyword>
<keyword id="KW-0997">Cell inner membrane</keyword>
<keyword id="KW-1003">Cell membrane</keyword>
<keyword id="KW-0472">Membrane</keyword>
<keyword id="KW-1185">Reference proteome</keyword>
<keyword id="KW-0808">Transferase</keyword>
<keyword id="KW-0812">Transmembrane</keyword>
<keyword id="KW-1133">Transmembrane helix</keyword>
<evidence type="ECO:0000255" key="1">
    <source>
        <dbReference type="HAMAP-Rule" id="MF_01148"/>
    </source>
</evidence>
<evidence type="ECO:0000305" key="2"/>
<organism>
    <name type="scientific">Haemophilus influenzae (strain ATCC 51907 / DSM 11121 / KW20 / Rd)</name>
    <dbReference type="NCBI Taxonomy" id="71421"/>
    <lineage>
        <taxon>Bacteria</taxon>
        <taxon>Pseudomonadati</taxon>
        <taxon>Pseudomonadota</taxon>
        <taxon>Gammaproteobacteria</taxon>
        <taxon>Pasteurellales</taxon>
        <taxon>Pasteurellaceae</taxon>
        <taxon>Haemophilus</taxon>
    </lineage>
</organism>
<sequence length="522" mass="58553">MKNLNRILLSIKFMNKYFTYLIAIISGLLGVFAFSPFDYWPLAYVSLLGLLYVAKNPKKSTALLSTFLWAMGFFCFGVSWLNVSIHQFGGASLGVSYFLVGLLAAYLALYPMLFTYLVHHFKVQSAVIFAVIWTLTEFLRGWIFTGFPWLQFGYTQIDSPFYGIAPIFGVTGLTFFTVWASAVIFNLVSSLFKTKNLKLVLANALLLIIVGGLSAYSSRIHFVKSVEDKAISVTLAQGNIEQNLKWDPNYFYSTLAIYQKLITENLGKTDLIILPESALPTLENAITPFFEGLERAAKETKTEIMVGTVFQDTKSGKLLNSIMTAGNPDFPYQPNTQNRYNKHHLVPFGEYVPLESILRPLNSVFNLPMSAFQSGEAVQPSLIAKKRAFSPAICYEIIFGEQVRQNLKQDTDYLLTLSNDAWFGDSIGPWQHLQMARMRALELGKPLIRATNTGISVFVDAQGKVLAQAPQFIETTLTYKIAPAEGKTPYSVLGNMPLYALSLLFLLLHSMMAFIRRKMNIL</sequence>